<keyword id="KW-0997">Cell inner membrane</keyword>
<keyword id="KW-1003">Cell membrane</keyword>
<keyword id="KW-0472">Membrane</keyword>
<keyword id="KW-0762">Sugar transport</keyword>
<keyword id="KW-0812">Transmembrane</keyword>
<keyword id="KW-1133">Transmembrane helix</keyword>
<keyword id="KW-0813">Transport</keyword>
<sequence length="396" mass="42407">MTINPVSRKVAWLRVVTLAIAAFIFNTTEFVPVGLLSDIAESFHMQTAQVGIMLTIYAWVVAVMSLPFMLLTSQMERRKLLICLFVLFIASHVLSFLAWNFTVLVISRIGIAFAHAIFWSITASLAIRLAPAGKRAQALSLIATGTALAMVLGLPIGRVVGQYFGWRTTFFAIGMGALITLLCLIKLLPKLPSEHSGSLKSLPLLFRRPALMSLYVLTVVVVTAHYTAYSYIEPFVQNVAGLSANFATVLLLILGGAGIIGSLVFGKLGNRHASSLVSIAIALLVVCLLLLLPAADSEAHLAILSIFWGIAIMVIGLGMQVKVLALAPDATDVAMALFSGIFNIGIGAGALVGNQVSLHWSMSAIGYIGAIPACAALVWAVLIFRKWPVTLEEQPH</sequence>
<proteinExistence type="inferred from homology"/>
<dbReference type="EMBL" id="CP001144">
    <property type="protein sequence ID" value="ACH76173.1"/>
    <property type="molecule type" value="Genomic_DNA"/>
</dbReference>
<dbReference type="RefSeq" id="WP_000154617.1">
    <property type="nucleotide sequence ID" value="NC_011205.1"/>
</dbReference>
<dbReference type="SMR" id="B5FHN1"/>
<dbReference type="KEGG" id="sed:SeD_A1813"/>
<dbReference type="HOGENOM" id="CLU_001265_61_2_6"/>
<dbReference type="Proteomes" id="UP000008322">
    <property type="component" value="Chromosome"/>
</dbReference>
<dbReference type="GO" id="GO:0005886">
    <property type="term" value="C:plasma membrane"/>
    <property type="evidence" value="ECO:0007669"/>
    <property type="project" value="UniProtKB-SubCell"/>
</dbReference>
<dbReference type="GO" id="GO:0015144">
    <property type="term" value="F:carbohydrate transmembrane transporter activity"/>
    <property type="evidence" value="ECO:0007669"/>
    <property type="project" value="UniProtKB-UniRule"/>
</dbReference>
<dbReference type="CDD" id="cd17324">
    <property type="entry name" value="MFS_NepI_like"/>
    <property type="match status" value="1"/>
</dbReference>
<dbReference type="Gene3D" id="1.20.1250.20">
    <property type="entry name" value="MFS general substrate transporter like domains"/>
    <property type="match status" value="1"/>
</dbReference>
<dbReference type="HAMAP" id="MF_00517">
    <property type="entry name" value="MFS_SotB"/>
    <property type="match status" value="1"/>
</dbReference>
<dbReference type="InterPro" id="IPR011701">
    <property type="entry name" value="MFS"/>
</dbReference>
<dbReference type="InterPro" id="IPR020846">
    <property type="entry name" value="MFS_dom"/>
</dbReference>
<dbReference type="InterPro" id="IPR050189">
    <property type="entry name" value="MFS_Efflux_Transporters"/>
</dbReference>
<dbReference type="InterPro" id="IPR036259">
    <property type="entry name" value="MFS_trans_sf"/>
</dbReference>
<dbReference type="InterPro" id="IPR023495">
    <property type="entry name" value="Sugar_effux_transptr_put"/>
</dbReference>
<dbReference type="NCBIfam" id="NF002921">
    <property type="entry name" value="PRK03545.1"/>
    <property type="match status" value="1"/>
</dbReference>
<dbReference type="PANTHER" id="PTHR43124">
    <property type="entry name" value="PURINE EFFLUX PUMP PBUE"/>
    <property type="match status" value="1"/>
</dbReference>
<dbReference type="PANTHER" id="PTHR43124:SF4">
    <property type="entry name" value="SUGAR EFFLUX TRANSPORTER"/>
    <property type="match status" value="1"/>
</dbReference>
<dbReference type="Pfam" id="PF07690">
    <property type="entry name" value="MFS_1"/>
    <property type="match status" value="1"/>
</dbReference>
<dbReference type="SUPFAM" id="SSF103473">
    <property type="entry name" value="MFS general substrate transporter"/>
    <property type="match status" value="1"/>
</dbReference>
<dbReference type="PROSITE" id="PS50850">
    <property type="entry name" value="MFS"/>
    <property type="match status" value="1"/>
</dbReference>
<protein>
    <recommendedName>
        <fullName evidence="1">Probable sugar efflux transporter</fullName>
    </recommendedName>
</protein>
<evidence type="ECO:0000255" key="1">
    <source>
        <dbReference type="HAMAP-Rule" id="MF_00517"/>
    </source>
</evidence>
<reference key="1">
    <citation type="journal article" date="2011" name="J. Bacteriol.">
        <title>Comparative genomics of 28 Salmonella enterica isolates: evidence for CRISPR-mediated adaptive sublineage evolution.</title>
        <authorList>
            <person name="Fricke W.F."/>
            <person name="Mammel M.K."/>
            <person name="McDermott P.F."/>
            <person name="Tartera C."/>
            <person name="White D.G."/>
            <person name="Leclerc J.E."/>
            <person name="Ravel J."/>
            <person name="Cebula T.A."/>
        </authorList>
    </citation>
    <scope>NUCLEOTIDE SEQUENCE [LARGE SCALE GENOMIC DNA]</scope>
    <source>
        <strain>CT_02021853</strain>
    </source>
</reference>
<name>SOTB_SALDC</name>
<feature type="chain" id="PRO_1000127470" description="Probable sugar efflux transporter">
    <location>
        <begin position="1"/>
        <end position="396"/>
    </location>
</feature>
<feature type="transmembrane region" description="Helical" evidence="1">
    <location>
        <begin position="15"/>
        <end position="35"/>
    </location>
</feature>
<feature type="transmembrane region" description="Helical" evidence="1">
    <location>
        <begin position="50"/>
        <end position="70"/>
    </location>
</feature>
<feature type="transmembrane region" description="Helical" evidence="1">
    <location>
        <begin position="81"/>
        <end position="101"/>
    </location>
</feature>
<feature type="transmembrane region" description="Helical" evidence="1">
    <location>
        <begin position="103"/>
        <end position="123"/>
    </location>
</feature>
<feature type="transmembrane region" description="Helical" evidence="1">
    <location>
        <begin position="136"/>
        <end position="156"/>
    </location>
</feature>
<feature type="transmembrane region" description="Helical" evidence="1">
    <location>
        <begin position="169"/>
        <end position="189"/>
    </location>
</feature>
<feature type="transmembrane region" description="Helical" evidence="1">
    <location>
        <begin position="209"/>
        <end position="229"/>
    </location>
</feature>
<feature type="transmembrane region" description="Helical" evidence="1">
    <location>
        <begin position="246"/>
        <end position="266"/>
    </location>
</feature>
<feature type="transmembrane region" description="Helical" evidence="1">
    <location>
        <begin position="275"/>
        <end position="295"/>
    </location>
</feature>
<feature type="transmembrane region" description="Helical" evidence="1">
    <location>
        <begin position="301"/>
        <end position="321"/>
    </location>
</feature>
<feature type="transmembrane region" description="Helical" evidence="1">
    <location>
        <begin position="333"/>
        <end position="353"/>
    </location>
</feature>
<feature type="transmembrane region" description="Helical" evidence="1">
    <location>
        <begin position="364"/>
        <end position="384"/>
    </location>
</feature>
<organism>
    <name type="scientific">Salmonella dublin (strain CT_02021853)</name>
    <dbReference type="NCBI Taxonomy" id="439851"/>
    <lineage>
        <taxon>Bacteria</taxon>
        <taxon>Pseudomonadati</taxon>
        <taxon>Pseudomonadota</taxon>
        <taxon>Gammaproteobacteria</taxon>
        <taxon>Enterobacterales</taxon>
        <taxon>Enterobacteriaceae</taxon>
        <taxon>Salmonella</taxon>
    </lineage>
</organism>
<comment type="function">
    <text evidence="1">Involved in the efflux of sugars. The physiological role may be the reduction of the intracellular concentration of toxic sugars or sugar metabolites.</text>
</comment>
<comment type="subcellular location">
    <subcellularLocation>
        <location evidence="1">Cell inner membrane</location>
        <topology evidence="1">Multi-pass membrane protein</topology>
    </subcellularLocation>
</comment>
<comment type="similarity">
    <text evidence="1">Belongs to the major facilitator superfamily. SotB (TC 2.A.1.2) family.</text>
</comment>
<accession>B5FHN1</accession>
<gene>
    <name evidence="1" type="primary">sotB</name>
    <name type="ordered locus">SeD_A1813</name>
</gene>